<organism>
    <name type="scientific">Rhizobium johnstonii (strain DSM 114642 / LMG 32736 / 3841)</name>
    <name type="common">Rhizobium leguminosarum bv. viciae</name>
    <dbReference type="NCBI Taxonomy" id="216596"/>
    <lineage>
        <taxon>Bacteria</taxon>
        <taxon>Pseudomonadati</taxon>
        <taxon>Pseudomonadota</taxon>
        <taxon>Alphaproteobacteria</taxon>
        <taxon>Hyphomicrobiales</taxon>
        <taxon>Rhizobiaceae</taxon>
        <taxon>Rhizobium/Agrobacterium group</taxon>
        <taxon>Rhizobium</taxon>
        <taxon>Rhizobium johnstonii</taxon>
    </lineage>
</organism>
<sequence length="198" mass="22814">MQRVTSYLPAGTPSSHPIAQVKLPHDLRHLRRKLLHLENGEMVMLDLKDPVLFANGDLLVRDDGELIEILAADEKLFEIRGRDRTHLVELAWHLGNRHLAAQIEEDRIVILRDHVIRAMLQGLGAVVLEIDEPFQPARGAYHSPGGHSHGHDHDHNHDHGHDHAHDHNHGHDHDHEHGYEHEHEHRHDRGHDHDHKHD</sequence>
<name>UREE_RHIJ3</name>
<feature type="chain" id="PRO_1000213118" description="Urease accessory protein UreE">
    <location>
        <begin position="1"/>
        <end position="198"/>
    </location>
</feature>
<feature type="region of interest" description="Disordered" evidence="2">
    <location>
        <begin position="137"/>
        <end position="198"/>
    </location>
</feature>
<feature type="compositionally biased region" description="Basic and acidic residues" evidence="2">
    <location>
        <begin position="149"/>
        <end position="198"/>
    </location>
</feature>
<proteinExistence type="inferred from homology"/>
<comment type="function">
    <text evidence="1">Involved in urease metallocenter assembly. Binds nickel. Probably functions as a nickel donor during metallocenter assembly.</text>
</comment>
<comment type="subcellular location">
    <subcellularLocation>
        <location evidence="1">Cytoplasm</location>
    </subcellularLocation>
</comment>
<comment type="similarity">
    <text evidence="1">Belongs to the UreE family.</text>
</comment>
<reference key="1">
    <citation type="journal article" date="2006" name="Genome Biol.">
        <title>The genome of Rhizobium leguminosarum has recognizable core and accessory components.</title>
        <authorList>
            <person name="Young J.P.W."/>
            <person name="Crossman L.C."/>
            <person name="Johnston A.W.B."/>
            <person name="Thomson N.R."/>
            <person name="Ghazoui Z.F."/>
            <person name="Hull K.H."/>
            <person name="Wexler M."/>
            <person name="Curson A.R.J."/>
            <person name="Todd J.D."/>
            <person name="Poole P.S."/>
            <person name="Mauchline T.H."/>
            <person name="East A.K."/>
            <person name="Quail M.A."/>
            <person name="Churcher C."/>
            <person name="Arrowsmith C."/>
            <person name="Cherevach I."/>
            <person name="Chillingworth T."/>
            <person name="Clarke K."/>
            <person name="Cronin A."/>
            <person name="Davis P."/>
            <person name="Fraser A."/>
            <person name="Hance Z."/>
            <person name="Hauser H."/>
            <person name="Jagels K."/>
            <person name="Moule S."/>
            <person name="Mungall K."/>
            <person name="Norbertczak H."/>
            <person name="Rabbinowitsch E."/>
            <person name="Sanders M."/>
            <person name="Simmonds M."/>
            <person name="Whitehead S."/>
            <person name="Parkhill J."/>
        </authorList>
    </citation>
    <scope>NUCLEOTIDE SEQUENCE [LARGE SCALE GENOMIC DNA]</scope>
    <source>
        <strain>DSM 114642 / LMG 32736 / 3841</strain>
    </source>
</reference>
<dbReference type="EMBL" id="AM236080">
    <property type="protein sequence ID" value="CAK09218.1"/>
    <property type="molecule type" value="Genomic_DNA"/>
</dbReference>
<dbReference type="RefSeq" id="WP_011653182.1">
    <property type="nucleotide sequence ID" value="NC_008380.1"/>
</dbReference>
<dbReference type="SMR" id="Q1MCW2"/>
<dbReference type="EnsemblBacteria" id="CAK09218">
    <property type="protein sequence ID" value="CAK09218"/>
    <property type="gene ID" value="RL3728"/>
</dbReference>
<dbReference type="KEGG" id="rle:RL3728"/>
<dbReference type="eggNOG" id="COG2371">
    <property type="taxonomic scope" value="Bacteria"/>
</dbReference>
<dbReference type="HOGENOM" id="CLU_093757_1_0_5"/>
<dbReference type="Proteomes" id="UP000006575">
    <property type="component" value="Chromosome"/>
</dbReference>
<dbReference type="GO" id="GO:0005737">
    <property type="term" value="C:cytoplasm"/>
    <property type="evidence" value="ECO:0007669"/>
    <property type="project" value="UniProtKB-SubCell"/>
</dbReference>
<dbReference type="GO" id="GO:0016151">
    <property type="term" value="F:nickel cation binding"/>
    <property type="evidence" value="ECO:0007669"/>
    <property type="project" value="UniProtKB-UniRule"/>
</dbReference>
<dbReference type="GO" id="GO:0051082">
    <property type="term" value="F:unfolded protein binding"/>
    <property type="evidence" value="ECO:0007669"/>
    <property type="project" value="UniProtKB-UniRule"/>
</dbReference>
<dbReference type="GO" id="GO:0006457">
    <property type="term" value="P:protein folding"/>
    <property type="evidence" value="ECO:0007669"/>
    <property type="project" value="InterPro"/>
</dbReference>
<dbReference type="GO" id="GO:0065003">
    <property type="term" value="P:protein-containing complex assembly"/>
    <property type="evidence" value="ECO:0007669"/>
    <property type="project" value="InterPro"/>
</dbReference>
<dbReference type="GO" id="GO:0019627">
    <property type="term" value="P:urea metabolic process"/>
    <property type="evidence" value="ECO:0007669"/>
    <property type="project" value="InterPro"/>
</dbReference>
<dbReference type="CDD" id="cd00571">
    <property type="entry name" value="UreE"/>
    <property type="match status" value="1"/>
</dbReference>
<dbReference type="Gene3D" id="2.60.260.20">
    <property type="entry name" value="Urease metallochaperone UreE, N-terminal domain"/>
    <property type="match status" value="1"/>
</dbReference>
<dbReference type="Gene3D" id="3.30.70.790">
    <property type="entry name" value="UreE, C-terminal domain"/>
    <property type="match status" value="1"/>
</dbReference>
<dbReference type="HAMAP" id="MF_00822">
    <property type="entry name" value="UreE"/>
    <property type="match status" value="1"/>
</dbReference>
<dbReference type="InterPro" id="IPR012406">
    <property type="entry name" value="UreE"/>
</dbReference>
<dbReference type="InterPro" id="IPR007864">
    <property type="entry name" value="UreE_C_dom"/>
</dbReference>
<dbReference type="InterPro" id="IPR004029">
    <property type="entry name" value="UreE_N"/>
</dbReference>
<dbReference type="InterPro" id="IPR036118">
    <property type="entry name" value="UreE_N_sf"/>
</dbReference>
<dbReference type="NCBIfam" id="NF009760">
    <property type="entry name" value="PRK13261.2-6"/>
    <property type="match status" value="1"/>
</dbReference>
<dbReference type="Pfam" id="PF05194">
    <property type="entry name" value="UreE_C"/>
    <property type="match status" value="1"/>
</dbReference>
<dbReference type="Pfam" id="PF02814">
    <property type="entry name" value="UreE_N"/>
    <property type="match status" value="1"/>
</dbReference>
<dbReference type="SMART" id="SM00988">
    <property type="entry name" value="UreE_N"/>
    <property type="match status" value="1"/>
</dbReference>
<dbReference type="SUPFAM" id="SSF69737">
    <property type="entry name" value="Urease metallochaperone UreE, C-terminal domain"/>
    <property type="match status" value="1"/>
</dbReference>
<dbReference type="SUPFAM" id="SSF69287">
    <property type="entry name" value="Urease metallochaperone UreE, N-terminal domain"/>
    <property type="match status" value="1"/>
</dbReference>
<accession>Q1MCW2</accession>
<evidence type="ECO:0000255" key="1">
    <source>
        <dbReference type="HAMAP-Rule" id="MF_00822"/>
    </source>
</evidence>
<evidence type="ECO:0000256" key="2">
    <source>
        <dbReference type="SAM" id="MobiDB-lite"/>
    </source>
</evidence>
<gene>
    <name evidence="1" type="primary">ureE</name>
    <name type="ordered locus">RL3728</name>
</gene>
<protein>
    <recommendedName>
        <fullName evidence="1">Urease accessory protein UreE</fullName>
    </recommendedName>
</protein>
<keyword id="KW-0143">Chaperone</keyword>
<keyword id="KW-0963">Cytoplasm</keyword>
<keyword id="KW-0533">Nickel</keyword>